<protein>
    <recommendedName>
        <fullName>cAMP-dependent protein kinase type I-alpha regulatory subunit</fullName>
    </recommendedName>
</protein>
<name>KAP0_CHICK</name>
<dbReference type="EMBL" id="AJ719493">
    <property type="protein sequence ID" value="CAG31152.1"/>
    <property type="molecule type" value="mRNA"/>
</dbReference>
<dbReference type="RefSeq" id="NP_001007846.1">
    <property type="nucleotide sequence ID" value="NM_001007845.2"/>
</dbReference>
<dbReference type="RefSeq" id="XP_015135378.1">
    <property type="nucleotide sequence ID" value="XM_015279892.4"/>
</dbReference>
<dbReference type="RefSeq" id="XP_015135379.1">
    <property type="nucleotide sequence ID" value="XM_015279893.1"/>
</dbReference>
<dbReference type="RefSeq" id="XP_015135380.1">
    <property type="nucleotide sequence ID" value="XM_015279894.4"/>
</dbReference>
<dbReference type="RefSeq" id="XP_040505438.1">
    <property type="nucleotide sequence ID" value="XM_040649504.2"/>
</dbReference>
<dbReference type="RefSeq" id="XP_046757999.1">
    <property type="nucleotide sequence ID" value="XM_046902043.1"/>
</dbReference>
<dbReference type="RefSeq" id="XP_046785390.1">
    <property type="nucleotide sequence ID" value="XM_046929434.1"/>
</dbReference>
<dbReference type="RefSeq" id="XP_046785391.1">
    <property type="nucleotide sequence ID" value="XM_046929435.1"/>
</dbReference>
<dbReference type="RefSeq" id="XP_046785392.1">
    <property type="nucleotide sequence ID" value="XM_046929436.1"/>
</dbReference>
<dbReference type="RefSeq" id="XP_046785393.1">
    <property type="nucleotide sequence ID" value="XM_046929437.1"/>
</dbReference>
<dbReference type="SMR" id="Q5ZM91"/>
<dbReference type="FunCoup" id="Q5ZM91">
    <property type="interactions" value="2060"/>
</dbReference>
<dbReference type="STRING" id="9031.ENSGALP00000033915"/>
<dbReference type="PaxDb" id="9031-ENSGALP00000033915"/>
<dbReference type="Ensembl" id="ENSGALT00010071109.1">
    <property type="protein sequence ID" value="ENSGALP00010043800.1"/>
    <property type="gene ID" value="ENSGALG00010029399.1"/>
</dbReference>
<dbReference type="GeneID" id="417438"/>
<dbReference type="KEGG" id="gga:417438"/>
<dbReference type="CTD" id="5573"/>
<dbReference type="VEuPathDB" id="HostDB:geneid_417438"/>
<dbReference type="eggNOG" id="KOG1113">
    <property type="taxonomic scope" value="Eukaryota"/>
</dbReference>
<dbReference type="GeneTree" id="ENSGT00940000155148"/>
<dbReference type="HOGENOM" id="CLU_018310_1_0_1"/>
<dbReference type="InParanoid" id="Q5ZM91"/>
<dbReference type="OMA" id="DQWERAN"/>
<dbReference type="OrthoDB" id="417078at2759"/>
<dbReference type="PhylomeDB" id="Q5ZM91"/>
<dbReference type="Reactome" id="R-GGA-163615">
    <property type="pathway name" value="PKA activation"/>
</dbReference>
<dbReference type="Reactome" id="R-GGA-164378">
    <property type="pathway name" value="PKA activation in glucagon signalling"/>
</dbReference>
<dbReference type="Reactome" id="R-GGA-180024">
    <property type="pathway name" value="DARPP-32 events"/>
</dbReference>
<dbReference type="Reactome" id="R-GGA-432040">
    <property type="pathway name" value="Vasopressin regulates renal water homeostasis via Aquaporins"/>
</dbReference>
<dbReference type="Reactome" id="R-GGA-442720">
    <property type="pathway name" value="CREB1 phosphorylation through the activation of Adenylate Cyclase"/>
</dbReference>
<dbReference type="Reactome" id="R-GGA-5610787">
    <property type="pathway name" value="Hedgehog 'off' state"/>
</dbReference>
<dbReference type="Reactome" id="R-GGA-9634597">
    <property type="pathway name" value="GPER1 signaling"/>
</dbReference>
<dbReference type="Reactome" id="R-GGA-983231">
    <property type="pathway name" value="Factors involved in megakaryocyte development and platelet production"/>
</dbReference>
<dbReference type="Reactome" id="R-GGA-9856530">
    <property type="pathway name" value="High laminar flow shear stress activates signaling by PIEZO1 and PECAM1:CDH5:KDR in endothelial cells"/>
</dbReference>
<dbReference type="PRO" id="PR:Q5ZM91"/>
<dbReference type="Proteomes" id="UP000000539">
    <property type="component" value="Chromosome 18"/>
</dbReference>
<dbReference type="Bgee" id="ENSGALG00000004237">
    <property type="expression patterns" value="Expressed in ovary and 13 other cell types or tissues"/>
</dbReference>
<dbReference type="GO" id="GO:0005930">
    <property type="term" value="C:axoneme"/>
    <property type="evidence" value="ECO:0007669"/>
    <property type="project" value="Ensembl"/>
</dbReference>
<dbReference type="GO" id="GO:0005952">
    <property type="term" value="C:cAMP-dependent protein kinase complex"/>
    <property type="evidence" value="ECO:0000318"/>
    <property type="project" value="GO_Central"/>
</dbReference>
<dbReference type="GO" id="GO:0005813">
    <property type="term" value="C:centrosome"/>
    <property type="evidence" value="ECO:0007669"/>
    <property type="project" value="Ensembl"/>
</dbReference>
<dbReference type="GO" id="GO:0005829">
    <property type="term" value="C:cytosol"/>
    <property type="evidence" value="ECO:0000318"/>
    <property type="project" value="GO_Central"/>
</dbReference>
<dbReference type="GO" id="GO:0098978">
    <property type="term" value="C:glutamatergic synapse"/>
    <property type="evidence" value="ECO:0007669"/>
    <property type="project" value="Ensembl"/>
</dbReference>
<dbReference type="GO" id="GO:0001772">
    <property type="term" value="C:immunological synapse"/>
    <property type="evidence" value="ECO:0007669"/>
    <property type="project" value="Ensembl"/>
</dbReference>
<dbReference type="GO" id="GO:0005771">
    <property type="term" value="C:multivesicular body"/>
    <property type="evidence" value="ECO:0007669"/>
    <property type="project" value="Ensembl"/>
</dbReference>
<dbReference type="GO" id="GO:0031594">
    <property type="term" value="C:neuromuscular junction"/>
    <property type="evidence" value="ECO:0007669"/>
    <property type="project" value="Ensembl"/>
</dbReference>
<dbReference type="GO" id="GO:0031588">
    <property type="term" value="C:nucleotide-activated protein kinase complex"/>
    <property type="evidence" value="ECO:0007669"/>
    <property type="project" value="Ensembl"/>
</dbReference>
<dbReference type="GO" id="GO:0044853">
    <property type="term" value="C:plasma membrane raft"/>
    <property type="evidence" value="ECO:0007669"/>
    <property type="project" value="Ensembl"/>
</dbReference>
<dbReference type="GO" id="GO:0120212">
    <property type="term" value="C:sperm head-tail coupling apparatus"/>
    <property type="evidence" value="ECO:0007669"/>
    <property type="project" value="Ensembl"/>
</dbReference>
<dbReference type="GO" id="GO:0030552">
    <property type="term" value="F:cAMP binding"/>
    <property type="evidence" value="ECO:0000318"/>
    <property type="project" value="GO_Central"/>
</dbReference>
<dbReference type="GO" id="GO:0004862">
    <property type="term" value="F:cAMP-dependent protein kinase inhibitor activity"/>
    <property type="evidence" value="ECO:0000318"/>
    <property type="project" value="GO_Central"/>
</dbReference>
<dbReference type="GO" id="GO:0019904">
    <property type="term" value="F:protein domain specific binding"/>
    <property type="evidence" value="ECO:0007669"/>
    <property type="project" value="Ensembl"/>
</dbReference>
<dbReference type="GO" id="GO:0034236">
    <property type="term" value="F:protein kinase A catalytic subunit binding"/>
    <property type="evidence" value="ECO:0000318"/>
    <property type="project" value="GO_Central"/>
</dbReference>
<dbReference type="GO" id="GO:0031625">
    <property type="term" value="F:ubiquitin protein ligase binding"/>
    <property type="evidence" value="ECO:0007669"/>
    <property type="project" value="Ensembl"/>
</dbReference>
<dbReference type="GO" id="GO:0007189">
    <property type="term" value="P:adenylate cyclase-activating G protein-coupled receptor signaling pathway"/>
    <property type="evidence" value="ECO:0000318"/>
    <property type="project" value="GO_Central"/>
</dbReference>
<dbReference type="GO" id="GO:0060038">
    <property type="term" value="P:cardiac muscle cell proliferation"/>
    <property type="evidence" value="ECO:0007669"/>
    <property type="project" value="Ensembl"/>
</dbReference>
<dbReference type="GO" id="GO:0071377">
    <property type="term" value="P:cellular response to glucagon stimulus"/>
    <property type="evidence" value="ECO:0007669"/>
    <property type="project" value="Ensembl"/>
</dbReference>
<dbReference type="GO" id="GO:0001707">
    <property type="term" value="P:mesoderm formation"/>
    <property type="evidence" value="ECO:0007669"/>
    <property type="project" value="Ensembl"/>
</dbReference>
<dbReference type="GO" id="GO:0046007">
    <property type="term" value="P:negative regulation of activated T cell proliferation"/>
    <property type="evidence" value="ECO:0007669"/>
    <property type="project" value="Ensembl"/>
</dbReference>
<dbReference type="GO" id="GO:0141162">
    <property type="term" value="P:negative regulation of cAMP/PKA signal transduction"/>
    <property type="evidence" value="ECO:0007669"/>
    <property type="project" value="Ensembl"/>
</dbReference>
<dbReference type="GO" id="GO:0010629">
    <property type="term" value="P:negative regulation of gene expression"/>
    <property type="evidence" value="ECO:0007669"/>
    <property type="project" value="Ensembl"/>
</dbReference>
<dbReference type="GO" id="GO:0032024">
    <property type="term" value="P:positive regulation of insulin secretion"/>
    <property type="evidence" value="ECO:0007669"/>
    <property type="project" value="Ensembl"/>
</dbReference>
<dbReference type="GO" id="GO:0045214">
    <property type="term" value="P:sarcomere organization"/>
    <property type="evidence" value="ECO:0007669"/>
    <property type="project" value="Ensembl"/>
</dbReference>
<dbReference type="CDD" id="cd00038">
    <property type="entry name" value="CAP_ED"/>
    <property type="match status" value="2"/>
</dbReference>
<dbReference type="CDD" id="cd12101">
    <property type="entry name" value="DD_RIalpha_PKA"/>
    <property type="match status" value="1"/>
</dbReference>
<dbReference type="FunFam" id="2.60.120.10:FF:000013">
    <property type="entry name" value="cAMP-dependent protein kinase type I regulatory subunit"/>
    <property type="match status" value="1"/>
</dbReference>
<dbReference type="FunFam" id="1.20.890.10:FF:000001">
    <property type="entry name" value="cAMP-dependent protein kinase type I-alpha regulatory subunit"/>
    <property type="match status" value="1"/>
</dbReference>
<dbReference type="FunFam" id="2.60.120.10:FF:000006">
    <property type="entry name" value="cAMP-dependent protein kinase type I-alpha regulatory subunit"/>
    <property type="match status" value="1"/>
</dbReference>
<dbReference type="Gene3D" id="1.20.890.10">
    <property type="entry name" value="cAMP-dependent protein kinase regulatory subunit, dimerization-anchoring domain"/>
    <property type="match status" value="1"/>
</dbReference>
<dbReference type="Gene3D" id="2.60.120.10">
    <property type="entry name" value="Jelly Rolls"/>
    <property type="match status" value="2"/>
</dbReference>
<dbReference type="InterPro" id="IPR050503">
    <property type="entry name" value="cAMP-dep_PK_reg_su-like"/>
</dbReference>
<dbReference type="InterPro" id="IPR012198">
    <property type="entry name" value="cAMP_dep_PK_reg_su"/>
</dbReference>
<dbReference type="InterPro" id="IPR003117">
    <property type="entry name" value="cAMP_dep_PK_reg_su_I/II_a/b"/>
</dbReference>
<dbReference type="InterPro" id="IPR018488">
    <property type="entry name" value="cNMP-bd_CS"/>
</dbReference>
<dbReference type="InterPro" id="IPR000595">
    <property type="entry name" value="cNMP-bd_dom"/>
</dbReference>
<dbReference type="InterPro" id="IPR018490">
    <property type="entry name" value="cNMP-bd_dom_sf"/>
</dbReference>
<dbReference type="InterPro" id="IPR014710">
    <property type="entry name" value="RmlC-like_jellyroll"/>
</dbReference>
<dbReference type="PANTHER" id="PTHR11635">
    <property type="entry name" value="CAMP-DEPENDENT PROTEIN KINASE REGULATORY CHAIN"/>
    <property type="match status" value="1"/>
</dbReference>
<dbReference type="PANTHER" id="PTHR11635:SF129">
    <property type="entry name" value="CAMP-DEPENDENT PROTEIN KINASE TYPE I-ALPHA REGULATORY SUBUNIT"/>
    <property type="match status" value="1"/>
</dbReference>
<dbReference type="Pfam" id="PF00027">
    <property type="entry name" value="cNMP_binding"/>
    <property type="match status" value="2"/>
</dbReference>
<dbReference type="Pfam" id="PF02197">
    <property type="entry name" value="RIIa"/>
    <property type="match status" value="1"/>
</dbReference>
<dbReference type="PIRSF" id="PIRSF000548">
    <property type="entry name" value="PK_regulatory"/>
    <property type="match status" value="1"/>
</dbReference>
<dbReference type="PRINTS" id="PR00103">
    <property type="entry name" value="CAMPKINASE"/>
</dbReference>
<dbReference type="SMART" id="SM00100">
    <property type="entry name" value="cNMP"/>
    <property type="match status" value="2"/>
</dbReference>
<dbReference type="SMART" id="SM00394">
    <property type="entry name" value="RIIa"/>
    <property type="match status" value="1"/>
</dbReference>
<dbReference type="SUPFAM" id="SSF51206">
    <property type="entry name" value="cAMP-binding domain-like"/>
    <property type="match status" value="2"/>
</dbReference>
<dbReference type="SUPFAM" id="SSF47391">
    <property type="entry name" value="Dimerization-anchoring domain of cAMP-dependent PK regulatory subunit"/>
    <property type="match status" value="1"/>
</dbReference>
<dbReference type="PROSITE" id="PS00888">
    <property type="entry name" value="CNMP_BINDING_1"/>
    <property type="match status" value="2"/>
</dbReference>
<dbReference type="PROSITE" id="PS00889">
    <property type="entry name" value="CNMP_BINDING_2"/>
    <property type="match status" value="2"/>
</dbReference>
<dbReference type="PROSITE" id="PS50042">
    <property type="entry name" value="CNMP_BINDING_3"/>
    <property type="match status" value="2"/>
</dbReference>
<keyword id="KW-0007">Acetylation</keyword>
<keyword id="KW-0114">cAMP</keyword>
<keyword id="KW-0116">cAMP-binding</keyword>
<keyword id="KW-1003">Cell membrane</keyword>
<keyword id="KW-1015">Disulfide bond</keyword>
<keyword id="KW-0472">Membrane</keyword>
<keyword id="KW-0547">Nucleotide-binding</keyword>
<keyword id="KW-0597">Phosphoprotein</keyword>
<keyword id="KW-1185">Reference proteome</keyword>
<keyword id="KW-0677">Repeat</keyword>
<evidence type="ECO:0000250" key="1"/>
<evidence type="ECO:0000250" key="2">
    <source>
        <dbReference type="UniProtKB" id="P00514"/>
    </source>
</evidence>
<evidence type="ECO:0000255" key="3"/>
<evidence type="ECO:0000256" key="4">
    <source>
        <dbReference type="SAM" id="MobiDB-lite"/>
    </source>
</evidence>
<evidence type="ECO:0000305" key="5"/>
<proteinExistence type="evidence at transcript level"/>
<gene>
    <name type="primary">PRKAR1A</name>
    <name type="ORF">RCJMB04_2n5</name>
</gene>
<feature type="initiator methionine" description="Removed" evidence="2">
    <location>
        <position position="1"/>
    </location>
</feature>
<feature type="chain" id="PRO_0000293483" description="cAMP-dependent protein kinase type I-alpha regulatory subunit">
    <location>
        <begin position="2"/>
        <end position="382"/>
    </location>
</feature>
<feature type="region of interest" description="Dimerization and phosphorylation" evidence="3">
    <location>
        <begin position="2"/>
        <end position="136"/>
    </location>
</feature>
<feature type="region of interest" description="Disordered" evidence="4">
    <location>
        <begin position="62"/>
        <end position="96"/>
    </location>
</feature>
<feature type="short sequence motif" description="Pseudophosphorylation motif">
    <location>
        <begin position="97"/>
        <end position="101"/>
    </location>
</feature>
<feature type="binding site">
    <location>
        <begin position="138"/>
        <end position="255"/>
    </location>
    <ligand>
        <name>3',5'-cyclic AMP</name>
        <dbReference type="ChEBI" id="CHEBI:58165"/>
        <label>1</label>
    </ligand>
</feature>
<feature type="binding site" evidence="1">
    <location>
        <position position="203"/>
    </location>
    <ligand>
        <name>3',5'-cyclic AMP</name>
        <dbReference type="ChEBI" id="CHEBI:58165"/>
        <label>1</label>
    </ligand>
</feature>
<feature type="binding site" evidence="1">
    <location>
        <position position="212"/>
    </location>
    <ligand>
        <name>3',5'-cyclic AMP</name>
        <dbReference type="ChEBI" id="CHEBI:58165"/>
        <label>1</label>
    </ligand>
</feature>
<feature type="binding site">
    <location>
        <begin position="256"/>
        <end position="382"/>
    </location>
    <ligand>
        <name>3',5'-cyclic AMP</name>
        <dbReference type="ChEBI" id="CHEBI:58165"/>
        <label>2</label>
    </ligand>
</feature>
<feature type="binding site" evidence="1">
    <location>
        <position position="327"/>
    </location>
    <ligand>
        <name>3',5'-cyclic AMP</name>
        <dbReference type="ChEBI" id="CHEBI:58165"/>
        <label>2</label>
    </ligand>
</feature>
<feature type="binding site" evidence="1">
    <location>
        <position position="336"/>
    </location>
    <ligand>
        <name>3',5'-cyclic AMP</name>
        <dbReference type="ChEBI" id="CHEBI:58165"/>
        <label>2</label>
    </ligand>
</feature>
<feature type="modified residue" description="N-acetylalanine" evidence="2">
    <location>
        <position position="2"/>
    </location>
</feature>
<feature type="disulfide bond" description="Interchain (with C-39)" evidence="1">
    <location>
        <position position="18"/>
    </location>
</feature>
<feature type="disulfide bond" description="Interchain (with C-18)" evidence="1">
    <location>
        <position position="39"/>
    </location>
</feature>
<sequence>MATSSSSSSEEERSLRECELYVQKHNIQQLLKDCIVQLCTVRPDRPMGFLREYFERLEKEETKQLLNQQKSGSRSDSREDEISPPPPMNPVVKGRRRRGAISAEVYTEEDAASYVRKVIPKDYKTMAALAKAIEKNVLFAHLDDNERSDIFDAMFPVTYIAGETVIQQGDEGDNFYVVDQGEMDVYVNNEWATSVGEGGSFGELALIYGTPRAATVKAKTNVKLWGIDRDSYRRILMGSTLRKRKMYEEFLSKVSILESLDKWERLTVADALEPVQFEDGQKIVVQGEPGDEFFIILEGTAAVLQRRSENEEFVEVGRLAPSDYFGEIALLMNRPRAATVVARGLLKCVKLDRPRFERVLGPCSDILKRNIQQYNSFVSLSV</sequence>
<comment type="subunit">
    <text evidence="1">The inactive form of the enzyme is composed of two regulatory chains and two catalytic chains. Activation by cAMP produces two active catalytic monomers and a regulatory dimer that binds four cAMP molecules (By similarity).</text>
</comment>
<comment type="subcellular location">
    <subcellularLocation>
        <location evidence="1">Cell membrane</location>
    </subcellularLocation>
</comment>
<comment type="PTM">
    <text evidence="1">The pseudophosphorylation site binds to the substrate-binding region of the catalytic chain but is not phosphorylated. The physiological significance of phosphorylations by other kinases is unclear (By similarity).</text>
</comment>
<comment type="similarity">
    <text evidence="5">Belongs to the cAMP-dependent kinase regulatory chain family.</text>
</comment>
<accession>Q5ZM91</accession>
<organism>
    <name type="scientific">Gallus gallus</name>
    <name type="common">Chicken</name>
    <dbReference type="NCBI Taxonomy" id="9031"/>
    <lineage>
        <taxon>Eukaryota</taxon>
        <taxon>Metazoa</taxon>
        <taxon>Chordata</taxon>
        <taxon>Craniata</taxon>
        <taxon>Vertebrata</taxon>
        <taxon>Euteleostomi</taxon>
        <taxon>Archelosauria</taxon>
        <taxon>Archosauria</taxon>
        <taxon>Dinosauria</taxon>
        <taxon>Saurischia</taxon>
        <taxon>Theropoda</taxon>
        <taxon>Coelurosauria</taxon>
        <taxon>Aves</taxon>
        <taxon>Neognathae</taxon>
        <taxon>Galloanserae</taxon>
        <taxon>Galliformes</taxon>
        <taxon>Phasianidae</taxon>
        <taxon>Phasianinae</taxon>
        <taxon>Gallus</taxon>
    </lineage>
</organism>
<reference key="1">
    <citation type="journal article" date="2005" name="Genome Biol.">
        <title>Full-length cDNAs from chicken bursal lymphocytes to facilitate gene function analysis.</title>
        <authorList>
            <person name="Caldwell R.B."/>
            <person name="Kierzek A.M."/>
            <person name="Arakawa H."/>
            <person name="Bezzubov Y."/>
            <person name="Zaim J."/>
            <person name="Fiedler P."/>
            <person name="Kutter S."/>
            <person name="Blagodatski A."/>
            <person name="Kostovska D."/>
            <person name="Koter M."/>
            <person name="Plachy J."/>
            <person name="Carninci P."/>
            <person name="Hayashizaki Y."/>
            <person name="Buerstedde J.-M."/>
        </authorList>
    </citation>
    <scope>NUCLEOTIDE SEQUENCE [LARGE SCALE MRNA]</scope>
    <source>
        <strain>CB</strain>
        <tissue>Bursa of Fabricius</tissue>
    </source>
</reference>